<protein>
    <recommendedName>
        <fullName evidence="1">Ribose-5-phosphate isomerase A</fullName>
        <ecNumber evidence="1">5.3.1.6</ecNumber>
    </recommendedName>
    <alternativeName>
        <fullName evidence="1">Phosphoriboisomerase A</fullName>
        <shortName evidence="1">PRI</shortName>
    </alternativeName>
</protein>
<comment type="function">
    <text evidence="1">Catalyzes the reversible conversion of ribose-5-phosphate to ribulose 5-phosphate.</text>
</comment>
<comment type="catalytic activity">
    <reaction evidence="1">
        <text>aldehydo-D-ribose 5-phosphate = D-ribulose 5-phosphate</text>
        <dbReference type="Rhea" id="RHEA:14657"/>
        <dbReference type="ChEBI" id="CHEBI:58121"/>
        <dbReference type="ChEBI" id="CHEBI:58273"/>
        <dbReference type="EC" id="5.3.1.6"/>
    </reaction>
</comment>
<comment type="pathway">
    <text evidence="1">Carbohydrate degradation; pentose phosphate pathway; D-ribose 5-phosphate from D-ribulose 5-phosphate (non-oxidative stage): step 1/1.</text>
</comment>
<comment type="subunit">
    <text evidence="1">Homodimer.</text>
</comment>
<comment type="similarity">
    <text evidence="1">Belongs to the ribose 5-phosphate isomerase family.</text>
</comment>
<keyword id="KW-0413">Isomerase</keyword>
<feature type="chain" id="PRO_1000016910" description="Ribose-5-phosphate isomerase A">
    <location>
        <begin position="1"/>
        <end position="231"/>
    </location>
</feature>
<feature type="active site" description="Proton acceptor" evidence="1">
    <location>
        <position position="107"/>
    </location>
</feature>
<feature type="binding site" evidence="1">
    <location>
        <begin position="32"/>
        <end position="35"/>
    </location>
    <ligand>
        <name>substrate</name>
    </ligand>
</feature>
<feature type="binding site" evidence="1">
    <location>
        <begin position="85"/>
        <end position="88"/>
    </location>
    <ligand>
        <name>substrate</name>
    </ligand>
</feature>
<feature type="binding site" evidence="1">
    <location>
        <begin position="98"/>
        <end position="101"/>
    </location>
    <ligand>
        <name>substrate</name>
    </ligand>
</feature>
<feature type="binding site" evidence="1">
    <location>
        <position position="125"/>
    </location>
    <ligand>
        <name>substrate</name>
    </ligand>
</feature>
<accession>A2S2I6</accession>
<sequence>MTQDELKRLVGEAAARYVTENVPQGAVIGVGTGSTANCFIDALAAVKDRYRGAVSSSVATTERLKSHGIKVFDLNEIESLQVYVDGADEIDGSGAMIKGGGGALTREKIVASVAETFVCIADASKRVAVLGQFPLPVEVVPMARTAIGRRLAALGGVPVLRVKQDGAPYVTDNGNEILDVKGLRIDDPRALEAAINGWPGVVTVGLFAQRGADLCLLGTERGVETLRYAAH</sequence>
<organism>
    <name type="scientific">Burkholderia mallei (strain NCTC 10229)</name>
    <dbReference type="NCBI Taxonomy" id="412022"/>
    <lineage>
        <taxon>Bacteria</taxon>
        <taxon>Pseudomonadati</taxon>
        <taxon>Pseudomonadota</taxon>
        <taxon>Betaproteobacteria</taxon>
        <taxon>Burkholderiales</taxon>
        <taxon>Burkholderiaceae</taxon>
        <taxon>Burkholderia</taxon>
        <taxon>pseudomallei group</taxon>
    </lineage>
</organism>
<gene>
    <name evidence="1" type="primary">rpiA</name>
    <name type="ordered locus">BMA10229_A0149</name>
</gene>
<reference key="1">
    <citation type="journal article" date="2010" name="Genome Biol. Evol.">
        <title>Continuing evolution of Burkholderia mallei through genome reduction and large-scale rearrangements.</title>
        <authorList>
            <person name="Losada L."/>
            <person name="Ronning C.M."/>
            <person name="DeShazer D."/>
            <person name="Woods D."/>
            <person name="Fedorova N."/>
            <person name="Kim H.S."/>
            <person name="Shabalina S.A."/>
            <person name="Pearson T.R."/>
            <person name="Brinkac L."/>
            <person name="Tan P."/>
            <person name="Nandi T."/>
            <person name="Crabtree J."/>
            <person name="Badger J."/>
            <person name="Beckstrom-Sternberg S."/>
            <person name="Saqib M."/>
            <person name="Schutzer S.E."/>
            <person name="Keim P."/>
            <person name="Nierman W.C."/>
        </authorList>
    </citation>
    <scope>NUCLEOTIDE SEQUENCE [LARGE SCALE GENOMIC DNA]</scope>
    <source>
        <strain>NCTC 10229</strain>
    </source>
</reference>
<proteinExistence type="inferred from homology"/>
<name>RPIA_BURM9</name>
<evidence type="ECO:0000255" key="1">
    <source>
        <dbReference type="HAMAP-Rule" id="MF_00170"/>
    </source>
</evidence>
<dbReference type="EC" id="5.3.1.6" evidence="1"/>
<dbReference type="EMBL" id="CP000546">
    <property type="protein sequence ID" value="ABN02649.1"/>
    <property type="molecule type" value="Genomic_DNA"/>
</dbReference>
<dbReference type="RefSeq" id="WP_004192848.1">
    <property type="nucleotide sequence ID" value="NC_008836.1"/>
</dbReference>
<dbReference type="SMR" id="A2S2I6"/>
<dbReference type="GeneID" id="93060124"/>
<dbReference type="KEGG" id="bml:BMA10229_A0149"/>
<dbReference type="HOGENOM" id="CLU_056590_1_1_4"/>
<dbReference type="UniPathway" id="UPA00115">
    <property type="reaction ID" value="UER00412"/>
</dbReference>
<dbReference type="Proteomes" id="UP000002283">
    <property type="component" value="Chromosome I"/>
</dbReference>
<dbReference type="GO" id="GO:0005829">
    <property type="term" value="C:cytosol"/>
    <property type="evidence" value="ECO:0007669"/>
    <property type="project" value="TreeGrafter"/>
</dbReference>
<dbReference type="GO" id="GO:0004751">
    <property type="term" value="F:ribose-5-phosphate isomerase activity"/>
    <property type="evidence" value="ECO:0007669"/>
    <property type="project" value="UniProtKB-UniRule"/>
</dbReference>
<dbReference type="GO" id="GO:0006014">
    <property type="term" value="P:D-ribose metabolic process"/>
    <property type="evidence" value="ECO:0007669"/>
    <property type="project" value="TreeGrafter"/>
</dbReference>
<dbReference type="GO" id="GO:0009052">
    <property type="term" value="P:pentose-phosphate shunt, non-oxidative branch"/>
    <property type="evidence" value="ECO:0007669"/>
    <property type="project" value="UniProtKB-UniRule"/>
</dbReference>
<dbReference type="CDD" id="cd01398">
    <property type="entry name" value="RPI_A"/>
    <property type="match status" value="1"/>
</dbReference>
<dbReference type="FunFam" id="3.40.50.1360:FF:000001">
    <property type="entry name" value="Ribose-5-phosphate isomerase A"/>
    <property type="match status" value="1"/>
</dbReference>
<dbReference type="Gene3D" id="3.30.70.260">
    <property type="match status" value="1"/>
</dbReference>
<dbReference type="Gene3D" id="3.40.50.1360">
    <property type="match status" value="1"/>
</dbReference>
<dbReference type="HAMAP" id="MF_00170">
    <property type="entry name" value="Rib_5P_isom_A"/>
    <property type="match status" value="1"/>
</dbReference>
<dbReference type="InterPro" id="IPR037171">
    <property type="entry name" value="NagB/RpiA_transferase-like"/>
</dbReference>
<dbReference type="InterPro" id="IPR020672">
    <property type="entry name" value="Ribose5P_isomerase_typA_subgr"/>
</dbReference>
<dbReference type="InterPro" id="IPR004788">
    <property type="entry name" value="Ribose5P_isomerase_type_A"/>
</dbReference>
<dbReference type="NCBIfam" id="NF001924">
    <property type="entry name" value="PRK00702.1"/>
    <property type="match status" value="1"/>
</dbReference>
<dbReference type="NCBIfam" id="TIGR00021">
    <property type="entry name" value="rpiA"/>
    <property type="match status" value="1"/>
</dbReference>
<dbReference type="PANTHER" id="PTHR11934">
    <property type="entry name" value="RIBOSE-5-PHOSPHATE ISOMERASE"/>
    <property type="match status" value="1"/>
</dbReference>
<dbReference type="PANTHER" id="PTHR11934:SF0">
    <property type="entry name" value="RIBOSE-5-PHOSPHATE ISOMERASE"/>
    <property type="match status" value="1"/>
</dbReference>
<dbReference type="Pfam" id="PF06026">
    <property type="entry name" value="Rib_5-P_isom_A"/>
    <property type="match status" value="1"/>
</dbReference>
<dbReference type="SUPFAM" id="SSF75445">
    <property type="entry name" value="D-ribose-5-phosphate isomerase (RpiA), lid domain"/>
    <property type="match status" value="1"/>
</dbReference>
<dbReference type="SUPFAM" id="SSF100950">
    <property type="entry name" value="NagB/RpiA/CoA transferase-like"/>
    <property type="match status" value="1"/>
</dbReference>